<protein>
    <recommendedName>
        <fullName evidence="1">Succinate--CoA ligase [ADP-forming] subunit beta</fullName>
        <ecNumber evidence="1">6.2.1.5</ecNumber>
    </recommendedName>
    <alternativeName>
        <fullName evidence="1">Succinyl-CoA synthetase subunit beta</fullName>
        <shortName evidence="1">SCS-beta</shortName>
    </alternativeName>
</protein>
<dbReference type="EC" id="6.2.1.5" evidence="1"/>
<dbReference type="EMBL" id="CP000269">
    <property type="protein sequence ID" value="ABR88725.1"/>
    <property type="molecule type" value="Genomic_DNA"/>
</dbReference>
<dbReference type="RefSeq" id="WP_012078255.1">
    <property type="nucleotide sequence ID" value="NC_009659.1"/>
</dbReference>
<dbReference type="SMR" id="A6SUY3"/>
<dbReference type="STRING" id="375286.mma_0390"/>
<dbReference type="KEGG" id="mms:mma_0390"/>
<dbReference type="eggNOG" id="COG0045">
    <property type="taxonomic scope" value="Bacteria"/>
</dbReference>
<dbReference type="HOGENOM" id="CLU_037430_0_2_4"/>
<dbReference type="OrthoDB" id="9802602at2"/>
<dbReference type="UniPathway" id="UPA00223">
    <property type="reaction ID" value="UER00999"/>
</dbReference>
<dbReference type="Proteomes" id="UP000006388">
    <property type="component" value="Chromosome"/>
</dbReference>
<dbReference type="GO" id="GO:0005829">
    <property type="term" value="C:cytosol"/>
    <property type="evidence" value="ECO:0007669"/>
    <property type="project" value="TreeGrafter"/>
</dbReference>
<dbReference type="GO" id="GO:0042709">
    <property type="term" value="C:succinate-CoA ligase complex"/>
    <property type="evidence" value="ECO:0007669"/>
    <property type="project" value="TreeGrafter"/>
</dbReference>
<dbReference type="GO" id="GO:0005524">
    <property type="term" value="F:ATP binding"/>
    <property type="evidence" value="ECO:0007669"/>
    <property type="project" value="UniProtKB-UniRule"/>
</dbReference>
<dbReference type="GO" id="GO:0000287">
    <property type="term" value="F:magnesium ion binding"/>
    <property type="evidence" value="ECO:0007669"/>
    <property type="project" value="UniProtKB-UniRule"/>
</dbReference>
<dbReference type="GO" id="GO:0004775">
    <property type="term" value="F:succinate-CoA ligase (ADP-forming) activity"/>
    <property type="evidence" value="ECO:0007669"/>
    <property type="project" value="UniProtKB-UniRule"/>
</dbReference>
<dbReference type="GO" id="GO:0004776">
    <property type="term" value="F:succinate-CoA ligase (GDP-forming) activity"/>
    <property type="evidence" value="ECO:0007669"/>
    <property type="project" value="RHEA"/>
</dbReference>
<dbReference type="GO" id="GO:0006104">
    <property type="term" value="P:succinyl-CoA metabolic process"/>
    <property type="evidence" value="ECO:0007669"/>
    <property type="project" value="TreeGrafter"/>
</dbReference>
<dbReference type="GO" id="GO:0006099">
    <property type="term" value="P:tricarboxylic acid cycle"/>
    <property type="evidence" value="ECO:0007669"/>
    <property type="project" value="UniProtKB-UniRule"/>
</dbReference>
<dbReference type="FunFam" id="3.30.1490.20:FF:000002">
    <property type="entry name" value="Succinate--CoA ligase [ADP-forming] subunit beta"/>
    <property type="match status" value="1"/>
</dbReference>
<dbReference type="FunFam" id="3.30.470.20:FF:000002">
    <property type="entry name" value="Succinate--CoA ligase [ADP-forming] subunit beta"/>
    <property type="match status" value="1"/>
</dbReference>
<dbReference type="FunFam" id="3.40.50.261:FF:000001">
    <property type="entry name" value="Succinate--CoA ligase [ADP-forming] subunit beta"/>
    <property type="match status" value="1"/>
</dbReference>
<dbReference type="Gene3D" id="3.30.1490.20">
    <property type="entry name" value="ATP-grasp fold, A domain"/>
    <property type="match status" value="1"/>
</dbReference>
<dbReference type="Gene3D" id="3.30.470.20">
    <property type="entry name" value="ATP-grasp fold, B domain"/>
    <property type="match status" value="1"/>
</dbReference>
<dbReference type="Gene3D" id="3.40.50.261">
    <property type="entry name" value="Succinyl-CoA synthetase domains"/>
    <property type="match status" value="1"/>
</dbReference>
<dbReference type="HAMAP" id="MF_00558">
    <property type="entry name" value="Succ_CoA_beta"/>
    <property type="match status" value="1"/>
</dbReference>
<dbReference type="InterPro" id="IPR011761">
    <property type="entry name" value="ATP-grasp"/>
</dbReference>
<dbReference type="InterPro" id="IPR013650">
    <property type="entry name" value="ATP-grasp_succ-CoA_synth-type"/>
</dbReference>
<dbReference type="InterPro" id="IPR013815">
    <property type="entry name" value="ATP_grasp_subdomain_1"/>
</dbReference>
<dbReference type="InterPro" id="IPR017866">
    <property type="entry name" value="Succ-CoA_synthase_bsu_CS"/>
</dbReference>
<dbReference type="InterPro" id="IPR005811">
    <property type="entry name" value="SUCC_ACL_C"/>
</dbReference>
<dbReference type="InterPro" id="IPR005809">
    <property type="entry name" value="Succ_CoA_ligase-like_bsu"/>
</dbReference>
<dbReference type="InterPro" id="IPR016102">
    <property type="entry name" value="Succinyl-CoA_synth-like"/>
</dbReference>
<dbReference type="NCBIfam" id="NF001913">
    <property type="entry name" value="PRK00696.1"/>
    <property type="match status" value="1"/>
</dbReference>
<dbReference type="NCBIfam" id="TIGR01016">
    <property type="entry name" value="sucCoAbeta"/>
    <property type="match status" value="1"/>
</dbReference>
<dbReference type="PANTHER" id="PTHR11815:SF10">
    <property type="entry name" value="SUCCINATE--COA LIGASE [GDP-FORMING] SUBUNIT BETA, MITOCHONDRIAL"/>
    <property type="match status" value="1"/>
</dbReference>
<dbReference type="PANTHER" id="PTHR11815">
    <property type="entry name" value="SUCCINYL-COA SYNTHETASE BETA CHAIN"/>
    <property type="match status" value="1"/>
</dbReference>
<dbReference type="Pfam" id="PF08442">
    <property type="entry name" value="ATP-grasp_2"/>
    <property type="match status" value="1"/>
</dbReference>
<dbReference type="Pfam" id="PF00549">
    <property type="entry name" value="Ligase_CoA"/>
    <property type="match status" value="1"/>
</dbReference>
<dbReference type="PIRSF" id="PIRSF001554">
    <property type="entry name" value="SucCS_beta"/>
    <property type="match status" value="1"/>
</dbReference>
<dbReference type="SUPFAM" id="SSF56059">
    <property type="entry name" value="Glutathione synthetase ATP-binding domain-like"/>
    <property type="match status" value="1"/>
</dbReference>
<dbReference type="SUPFAM" id="SSF52210">
    <property type="entry name" value="Succinyl-CoA synthetase domains"/>
    <property type="match status" value="1"/>
</dbReference>
<dbReference type="PROSITE" id="PS50975">
    <property type="entry name" value="ATP_GRASP"/>
    <property type="match status" value="1"/>
</dbReference>
<dbReference type="PROSITE" id="PS01217">
    <property type="entry name" value="SUCCINYL_COA_LIG_3"/>
    <property type="match status" value="1"/>
</dbReference>
<proteinExistence type="inferred from homology"/>
<reference key="1">
    <citation type="journal article" date="2007" name="PLoS Genet.">
        <title>Genome analysis of Minibacterium massiliensis highlights the convergent evolution of water-living bacteria.</title>
        <authorList>
            <person name="Audic S."/>
            <person name="Robert C."/>
            <person name="Campagna B."/>
            <person name="Parinello H."/>
            <person name="Claverie J.-M."/>
            <person name="Raoult D."/>
            <person name="Drancourt M."/>
        </authorList>
    </citation>
    <scope>NUCLEOTIDE SEQUENCE [LARGE SCALE GENOMIC DNA]</scope>
    <source>
        <strain>Marseille</strain>
    </source>
</reference>
<evidence type="ECO:0000255" key="1">
    <source>
        <dbReference type="HAMAP-Rule" id="MF_00558"/>
    </source>
</evidence>
<accession>A6SUY3</accession>
<name>SUCC_JANMA</name>
<sequence>MNIHEYQGKEILRKYGVTTPKGFPCFSVDEAVQAAEKLGGKVWVVKAQIHAGGRGKGGGVKVAKSLDEVRKYANDILGMTLVTHQTGPEGRLVKRLLIEEGADIKKELYVGMVVDRGSQRVALMASSEGGMDIEHVAEHTPEKIHKVFIDPVKGLLDSEADDIARKIGVPEGSIGQARAFMQGLYKAFDETDASLAEINPLIVTGDDRIVALDAKFNFDSNAMYRHPEIQEMRDLDEEDPAEIEASKFDLTYISLDGNIGCLVNGAGLAMATMDVIKLYGGSPANFLDVGGGATTEKVTEAFKIMLKNPDIKAILVNIFGGIMKCDVIAQGVIAAAKQVDLTVPLVVRMAGTNEELGKKILAESGLPIITANNMAEAAEKVVNAAQGK</sequence>
<comment type="function">
    <text evidence="1">Succinyl-CoA synthetase functions in the citric acid cycle (TCA), coupling the hydrolysis of succinyl-CoA to the synthesis of either ATP or GTP and thus represents the only step of substrate-level phosphorylation in the TCA. The beta subunit provides nucleotide specificity of the enzyme and binds the substrate succinate, while the binding sites for coenzyme A and phosphate are found in the alpha subunit.</text>
</comment>
<comment type="catalytic activity">
    <reaction evidence="1">
        <text>succinate + ATP + CoA = succinyl-CoA + ADP + phosphate</text>
        <dbReference type="Rhea" id="RHEA:17661"/>
        <dbReference type="ChEBI" id="CHEBI:30031"/>
        <dbReference type="ChEBI" id="CHEBI:30616"/>
        <dbReference type="ChEBI" id="CHEBI:43474"/>
        <dbReference type="ChEBI" id="CHEBI:57287"/>
        <dbReference type="ChEBI" id="CHEBI:57292"/>
        <dbReference type="ChEBI" id="CHEBI:456216"/>
        <dbReference type="EC" id="6.2.1.5"/>
    </reaction>
    <physiologicalReaction direction="right-to-left" evidence="1">
        <dbReference type="Rhea" id="RHEA:17663"/>
    </physiologicalReaction>
</comment>
<comment type="catalytic activity">
    <reaction evidence="1">
        <text>GTP + succinate + CoA = succinyl-CoA + GDP + phosphate</text>
        <dbReference type="Rhea" id="RHEA:22120"/>
        <dbReference type="ChEBI" id="CHEBI:30031"/>
        <dbReference type="ChEBI" id="CHEBI:37565"/>
        <dbReference type="ChEBI" id="CHEBI:43474"/>
        <dbReference type="ChEBI" id="CHEBI:57287"/>
        <dbReference type="ChEBI" id="CHEBI:57292"/>
        <dbReference type="ChEBI" id="CHEBI:58189"/>
    </reaction>
    <physiologicalReaction direction="right-to-left" evidence="1">
        <dbReference type="Rhea" id="RHEA:22122"/>
    </physiologicalReaction>
</comment>
<comment type="cofactor">
    <cofactor evidence="1">
        <name>Mg(2+)</name>
        <dbReference type="ChEBI" id="CHEBI:18420"/>
    </cofactor>
    <text evidence="1">Binds 1 Mg(2+) ion per subunit.</text>
</comment>
<comment type="pathway">
    <text evidence="1">Carbohydrate metabolism; tricarboxylic acid cycle; succinate from succinyl-CoA (ligase route): step 1/1.</text>
</comment>
<comment type="subunit">
    <text evidence="1">Heterotetramer of two alpha and two beta subunits.</text>
</comment>
<comment type="similarity">
    <text evidence="1">Belongs to the succinate/malate CoA ligase beta subunit family.</text>
</comment>
<organism>
    <name type="scientific">Janthinobacterium sp. (strain Marseille)</name>
    <name type="common">Minibacterium massiliensis</name>
    <dbReference type="NCBI Taxonomy" id="375286"/>
    <lineage>
        <taxon>Bacteria</taxon>
        <taxon>Pseudomonadati</taxon>
        <taxon>Pseudomonadota</taxon>
        <taxon>Betaproteobacteria</taxon>
        <taxon>Burkholderiales</taxon>
        <taxon>Oxalobacteraceae</taxon>
        <taxon>Janthinobacterium</taxon>
    </lineage>
</organism>
<feature type="chain" id="PRO_1000082109" description="Succinate--CoA ligase [ADP-forming] subunit beta">
    <location>
        <begin position="1"/>
        <end position="388"/>
    </location>
</feature>
<feature type="domain" description="ATP-grasp" evidence="1">
    <location>
        <begin position="9"/>
        <end position="244"/>
    </location>
</feature>
<feature type="binding site" evidence="1">
    <location>
        <position position="46"/>
    </location>
    <ligand>
        <name>ATP</name>
        <dbReference type="ChEBI" id="CHEBI:30616"/>
    </ligand>
</feature>
<feature type="binding site" evidence="1">
    <location>
        <begin position="53"/>
        <end position="55"/>
    </location>
    <ligand>
        <name>ATP</name>
        <dbReference type="ChEBI" id="CHEBI:30616"/>
    </ligand>
</feature>
<feature type="binding site" evidence="1">
    <location>
        <position position="99"/>
    </location>
    <ligand>
        <name>ATP</name>
        <dbReference type="ChEBI" id="CHEBI:30616"/>
    </ligand>
</feature>
<feature type="binding site" evidence="1">
    <location>
        <position position="102"/>
    </location>
    <ligand>
        <name>ATP</name>
        <dbReference type="ChEBI" id="CHEBI:30616"/>
    </ligand>
</feature>
<feature type="binding site" evidence="1">
    <location>
        <position position="107"/>
    </location>
    <ligand>
        <name>ATP</name>
        <dbReference type="ChEBI" id="CHEBI:30616"/>
    </ligand>
</feature>
<feature type="binding site" evidence="1">
    <location>
        <position position="199"/>
    </location>
    <ligand>
        <name>Mg(2+)</name>
        <dbReference type="ChEBI" id="CHEBI:18420"/>
    </ligand>
</feature>
<feature type="binding site" evidence="1">
    <location>
        <position position="213"/>
    </location>
    <ligand>
        <name>Mg(2+)</name>
        <dbReference type="ChEBI" id="CHEBI:18420"/>
    </ligand>
</feature>
<feature type="binding site" evidence="1">
    <location>
        <position position="264"/>
    </location>
    <ligand>
        <name>substrate</name>
        <note>ligand shared with subunit alpha</note>
    </ligand>
</feature>
<feature type="binding site" evidence="1">
    <location>
        <begin position="321"/>
        <end position="323"/>
    </location>
    <ligand>
        <name>substrate</name>
        <note>ligand shared with subunit alpha</note>
    </ligand>
</feature>
<keyword id="KW-0067">ATP-binding</keyword>
<keyword id="KW-0436">Ligase</keyword>
<keyword id="KW-0460">Magnesium</keyword>
<keyword id="KW-0479">Metal-binding</keyword>
<keyword id="KW-0547">Nucleotide-binding</keyword>
<keyword id="KW-0816">Tricarboxylic acid cycle</keyword>
<gene>
    <name evidence="1" type="primary">sucC</name>
    <name type="ordered locus">mma_0390</name>
</gene>